<dbReference type="EC" id="1.11.1.7"/>
<dbReference type="EMBL" id="X98804">
    <property type="protein sequence ID" value="CAA67336.1"/>
    <property type="molecule type" value="mRNA"/>
</dbReference>
<dbReference type="EMBL" id="AC007915">
    <property type="protein sequence ID" value="AAF69153.1"/>
    <property type="molecule type" value="Genomic_DNA"/>
</dbReference>
<dbReference type="EMBL" id="AC020576">
    <property type="protein sequence ID" value="AAF78280.1"/>
    <property type="molecule type" value="Genomic_DNA"/>
</dbReference>
<dbReference type="EMBL" id="CP002684">
    <property type="protein sequence ID" value="AEE32069.1"/>
    <property type="molecule type" value="Genomic_DNA"/>
</dbReference>
<dbReference type="EMBL" id="BT008612">
    <property type="protein sequence ID" value="AAP40436.1"/>
    <property type="molecule type" value="mRNA"/>
</dbReference>
<dbReference type="EMBL" id="AY086626">
    <property type="protein sequence ID" value="AAM63684.1"/>
    <property type="molecule type" value="mRNA"/>
</dbReference>
<dbReference type="RefSeq" id="NP_175117.1">
    <property type="nucleotide sequence ID" value="NM_103577.4"/>
</dbReference>
<dbReference type="SMR" id="Q96512"/>
<dbReference type="FunCoup" id="Q96512">
    <property type="interactions" value="186"/>
</dbReference>
<dbReference type="STRING" id="3702.Q96512"/>
<dbReference type="PeroxiBase" id="85">
    <property type="entry name" value="AtPrx09"/>
</dbReference>
<dbReference type="GlyCosmos" id="Q96512">
    <property type="glycosylation" value="1 site, No reported glycans"/>
</dbReference>
<dbReference type="GlyGen" id="Q96512">
    <property type="glycosylation" value="1 site"/>
</dbReference>
<dbReference type="PaxDb" id="3702-AT1G44970.1"/>
<dbReference type="ProteomicsDB" id="236778"/>
<dbReference type="EnsemblPlants" id="AT1G44970.1">
    <property type="protein sequence ID" value="AT1G44970.1"/>
    <property type="gene ID" value="AT1G44970"/>
</dbReference>
<dbReference type="GeneID" id="841062"/>
<dbReference type="Gramene" id="AT1G44970.1">
    <property type="protein sequence ID" value="AT1G44970.1"/>
    <property type="gene ID" value="AT1G44970"/>
</dbReference>
<dbReference type="KEGG" id="ath:AT1G44970"/>
<dbReference type="Araport" id="AT1G44970"/>
<dbReference type="TAIR" id="AT1G44970">
    <property type="gene designation" value="PRX9"/>
</dbReference>
<dbReference type="eggNOG" id="ENOG502RH3E">
    <property type="taxonomic scope" value="Eukaryota"/>
</dbReference>
<dbReference type="HOGENOM" id="CLU_010543_0_1_1"/>
<dbReference type="InParanoid" id="Q96512"/>
<dbReference type="OMA" id="TYYNGLK"/>
<dbReference type="OrthoDB" id="2113341at2759"/>
<dbReference type="PhylomeDB" id="Q96512"/>
<dbReference type="BioCyc" id="ARA:AT1G44970-MONOMER"/>
<dbReference type="PRO" id="PR:Q96512"/>
<dbReference type="Proteomes" id="UP000006548">
    <property type="component" value="Chromosome 1"/>
</dbReference>
<dbReference type="ExpressionAtlas" id="Q96512">
    <property type="expression patterns" value="baseline and differential"/>
</dbReference>
<dbReference type="GO" id="GO:0005576">
    <property type="term" value="C:extracellular region"/>
    <property type="evidence" value="ECO:0007669"/>
    <property type="project" value="UniProtKB-SubCell"/>
</dbReference>
<dbReference type="GO" id="GO:0020037">
    <property type="term" value="F:heme binding"/>
    <property type="evidence" value="ECO:0007669"/>
    <property type="project" value="InterPro"/>
</dbReference>
<dbReference type="GO" id="GO:0140825">
    <property type="term" value="F:lactoperoxidase activity"/>
    <property type="evidence" value="ECO:0007669"/>
    <property type="project" value="UniProtKB-EC"/>
</dbReference>
<dbReference type="GO" id="GO:0046872">
    <property type="term" value="F:metal ion binding"/>
    <property type="evidence" value="ECO:0007669"/>
    <property type="project" value="UniProtKB-KW"/>
</dbReference>
<dbReference type="GO" id="GO:0004601">
    <property type="term" value="F:peroxidase activity"/>
    <property type="evidence" value="ECO:0000314"/>
    <property type="project" value="TAIR"/>
</dbReference>
<dbReference type="GO" id="GO:0048658">
    <property type="term" value="P:anther wall tapetum development"/>
    <property type="evidence" value="ECO:0000316"/>
    <property type="project" value="TAIR"/>
</dbReference>
<dbReference type="GO" id="GO:0042744">
    <property type="term" value="P:hydrogen peroxide catabolic process"/>
    <property type="evidence" value="ECO:0007669"/>
    <property type="project" value="UniProtKB-KW"/>
</dbReference>
<dbReference type="GO" id="GO:0006979">
    <property type="term" value="P:response to oxidative stress"/>
    <property type="evidence" value="ECO:0007669"/>
    <property type="project" value="InterPro"/>
</dbReference>
<dbReference type="CDD" id="cd00693">
    <property type="entry name" value="secretory_peroxidase"/>
    <property type="match status" value="1"/>
</dbReference>
<dbReference type="FunFam" id="1.10.420.10:FF:000001">
    <property type="entry name" value="Peroxidase"/>
    <property type="match status" value="1"/>
</dbReference>
<dbReference type="FunFam" id="1.10.520.10:FF:000001">
    <property type="entry name" value="Peroxidase"/>
    <property type="match status" value="1"/>
</dbReference>
<dbReference type="Gene3D" id="1.10.520.10">
    <property type="match status" value="1"/>
</dbReference>
<dbReference type="Gene3D" id="1.10.420.10">
    <property type="entry name" value="Peroxidase, domain 2"/>
    <property type="match status" value="1"/>
</dbReference>
<dbReference type="InterPro" id="IPR002016">
    <property type="entry name" value="Haem_peroxidase"/>
</dbReference>
<dbReference type="InterPro" id="IPR010255">
    <property type="entry name" value="Haem_peroxidase_sf"/>
</dbReference>
<dbReference type="InterPro" id="IPR000823">
    <property type="entry name" value="Peroxidase_pln"/>
</dbReference>
<dbReference type="InterPro" id="IPR019794">
    <property type="entry name" value="Peroxidases_AS"/>
</dbReference>
<dbReference type="InterPro" id="IPR019793">
    <property type="entry name" value="Peroxidases_heam-ligand_BS"/>
</dbReference>
<dbReference type="InterPro" id="IPR033905">
    <property type="entry name" value="Secretory_peroxidase"/>
</dbReference>
<dbReference type="PANTHER" id="PTHR31388">
    <property type="entry name" value="PEROXIDASE 72-RELATED"/>
    <property type="match status" value="1"/>
</dbReference>
<dbReference type="PANTHER" id="PTHR31388:SF164">
    <property type="entry name" value="PEROXIDASE 9"/>
    <property type="match status" value="1"/>
</dbReference>
<dbReference type="Pfam" id="PF00141">
    <property type="entry name" value="peroxidase"/>
    <property type="match status" value="1"/>
</dbReference>
<dbReference type="PRINTS" id="PR00458">
    <property type="entry name" value="PEROXIDASE"/>
</dbReference>
<dbReference type="PRINTS" id="PR00461">
    <property type="entry name" value="PLPEROXIDASE"/>
</dbReference>
<dbReference type="SUPFAM" id="SSF48113">
    <property type="entry name" value="Heme-dependent peroxidases"/>
    <property type="match status" value="1"/>
</dbReference>
<dbReference type="PROSITE" id="PS00435">
    <property type="entry name" value="PEROXIDASE_1"/>
    <property type="match status" value="1"/>
</dbReference>
<dbReference type="PROSITE" id="PS00436">
    <property type="entry name" value="PEROXIDASE_2"/>
    <property type="match status" value="1"/>
</dbReference>
<dbReference type="PROSITE" id="PS50873">
    <property type="entry name" value="PEROXIDASE_4"/>
    <property type="match status" value="1"/>
</dbReference>
<accession>Q96512</accession>
<accession>Q9LPD4</accession>
<evidence type="ECO:0000255" key="1"/>
<evidence type="ECO:0000255" key="2">
    <source>
        <dbReference type="PROSITE-ProRule" id="PRU00297"/>
    </source>
</evidence>
<evidence type="ECO:0000255" key="3">
    <source>
        <dbReference type="PROSITE-ProRule" id="PRU10012"/>
    </source>
</evidence>
<evidence type="ECO:0000305" key="4"/>
<name>PER9_ARATH</name>
<proteinExistence type="evidence at protein level"/>
<feature type="signal peptide" evidence="1">
    <location>
        <begin position="1"/>
        <end position="23"/>
    </location>
</feature>
<feature type="chain" id="PRO_0000023675" description="Peroxidase 9">
    <location>
        <begin position="24"/>
        <end position="346"/>
    </location>
</feature>
<feature type="active site" description="Proton acceptor" evidence="2 3">
    <location>
        <position position="85"/>
    </location>
</feature>
<feature type="binding site" evidence="2">
    <location>
        <position position="86"/>
    </location>
    <ligand>
        <name>Ca(2+)</name>
        <dbReference type="ChEBI" id="CHEBI:29108"/>
        <label>1</label>
    </ligand>
</feature>
<feature type="binding site" evidence="2">
    <location>
        <position position="89"/>
    </location>
    <ligand>
        <name>Ca(2+)</name>
        <dbReference type="ChEBI" id="CHEBI:29108"/>
        <label>1</label>
    </ligand>
</feature>
<feature type="binding site" evidence="2">
    <location>
        <position position="91"/>
    </location>
    <ligand>
        <name>Ca(2+)</name>
        <dbReference type="ChEBI" id="CHEBI:29108"/>
        <label>1</label>
    </ligand>
</feature>
<feature type="binding site" evidence="2">
    <location>
        <position position="93"/>
    </location>
    <ligand>
        <name>Ca(2+)</name>
        <dbReference type="ChEBI" id="CHEBI:29108"/>
        <label>1</label>
    </ligand>
</feature>
<feature type="binding site" evidence="2">
    <location>
        <position position="95"/>
    </location>
    <ligand>
        <name>Ca(2+)</name>
        <dbReference type="ChEBI" id="CHEBI:29108"/>
        <label>1</label>
    </ligand>
</feature>
<feature type="binding site" evidence="2">
    <location>
        <position position="182"/>
    </location>
    <ligand>
        <name>substrate</name>
    </ligand>
</feature>
<feature type="binding site" description="axial binding residue" evidence="2">
    <location>
        <position position="212"/>
    </location>
    <ligand>
        <name>heme b</name>
        <dbReference type="ChEBI" id="CHEBI:60344"/>
    </ligand>
    <ligandPart>
        <name>Fe</name>
        <dbReference type="ChEBI" id="CHEBI:18248"/>
    </ligandPart>
</feature>
<feature type="binding site" evidence="2">
    <location>
        <position position="213"/>
    </location>
    <ligand>
        <name>Ca(2+)</name>
        <dbReference type="ChEBI" id="CHEBI:29108"/>
        <label>2</label>
    </ligand>
</feature>
<feature type="binding site" evidence="2">
    <location>
        <position position="264"/>
    </location>
    <ligand>
        <name>Ca(2+)</name>
        <dbReference type="ChEBI" id="CHEBI:29108"/>
        <label>2</label>
    </ligand>
</feature>
<feature type="binding site" evidence="2">
    <location>
        <position position="267"/>
    </location>
    <ligand>
        <name>Ca(2+)</name>
        <dbReference type="ChEBI" id="CHEBI:29108"/>
        <label>2</label>
    </ligand>
</feature>
<feature type="binding site" evidence="2">
    <location>
        <position position="272"/>
    </location>
    <ligand>
        <name>Ca(2+)</name>
        <dbReference type="ChEBI" id="CHEBI:29108"/>
        <label>2</label>
    </ligand>
</feature>
<feature type="site" description="Transition state stabilizer" evidence="2">
    <location>
        <position position="81"/>
    </location>
</feature>
<feature type="glycosylation site" description="N-linked (GlcNAc...) asparagine" evidence="1">
    <location>
        <position position="185"/>
    </location>
</feature>
<feature type="disulfide bond" evidence="2">
    <location>
        <begin position="54"/>
        <end position="134"/>
    </location>
</feature>
<feature type="disulfide bond" evidence="2">
    <location>
        <begin position="87"/>
        <end position="92"/>
    </location>
</feature>
<feature type="disulfide bond" evidence="2">
    <location>
        <begin position="140"/>
        <end position="342"/>
    </location>
</feature>
<feature type="disulfide bond" evidence="2">
    <location>
        <begin position="219"/>
        <end position="251"/>
    </location>
</feature>
<feature type="sequence conflict" description="In Ref. 5; AAM63684." evidence="4" ref="5">
    <original>A</original>
    <variation>S</variation>
    <location>
        <position position="269"/>
    </location>
</feature>
<feature type="sequence conflict" description="In Ref. 5; AAM63684." evidence="4" ref="5">
    <original>E</original>
    <variation>Q</variation>
    <location>
        <position position="290"/>
    </location>
</feature>
<feature type="sequence conflict" description="In Ref. 5; AAM63684." evidence="4" ref="5">
    <original>A</original>
    <variation>S</variation>
    <location>
        <position position="302"/>
    </location>
</feature>
<reference key="1">
    <citation type="submission" date="1996-06" db="EMBL/GenBank/DDBJ databases">
        <title>From expressed sequence tags to structure, function, evolution and expression of 28 ER-targeted Arabidopsis peroxidases.</title>
        <authorList>
            <person name="Welinder K.G."/>
            <person name="Jespersen H.M."/>
            <person name="Kjaersgaard I.V.H."/>
            <person name="Justesen A.F."/>
            <person name="Oestergaard L."/>
            <person name="Abelskov A.K."/>
            <person name="Hansen L.N."/>
            <person name="Rasmussen S.K."/>
        </authorList>
    </citation>
    <scope>NUCLEOTIDE SEQUENCE [MRNA]</scope>
    <source>
        <strain>cv. Columbia</strain>
    </source>
</reference>
<reference key="2">
    <citation type="journal article" date="2000" name="Nature">
        <title>Sequence and analysis of chromosome 1 of the plant Arabidopsis thaliana.</title>
        <authorList>
            <person name="Theologis A."/>
            <person name="Ecker J.R."/>
            <person name="Palm C.J."/>
            <person name="Federspiel N.A."/>
            <person name="Kaul S."/>
            <person name="White O."/>
            <person name="Alonso J."/>
            <person name="Altafi H."/>
            <person name="Araujo R."/>
            <person name="Bowman C.L."/>
            <person name="Brooks S.Y."/>
            <person name="Buehler E."/>
            <person name="Chan A."/>
            <person name="Chao Q."/>
            <person name="Chen H."/>
            <person name="Cheuk R.F."/>
            <person name="Chin C.W."/>
            <person name="Chung M.K."/>
            <person name="Conn L."/>
            <person name="Conway A.B."/>
            <person name="Conway A.R."/>
            <person name="Creasy T.H."/>
            <person name="Dewar K."/>
            <person name="Dunn P."/>
            <person name="Etgu P."/>
            <person name="Feldblyum T.V."/>
            <person name="Feng J.-D."/>
            <person name="Fong B."/>
            <person name="Fujii C.Y."/>
            <person name="Gill J.E."/>
            <person name="Goldsmith A.D."/>
            <person name="Haas B."/>
            <person name="Hansen N.F."/>
            <person name="Hughes B."/>
            <person name="Huizar L."/>
            <person name="Hunter J.L."/>
            <person name="Jenkins J."/>
            <person name="Johnson-Hopson C."/>
            <person name="Khan S."/>
            <person name="Khaykin E."/>
            <person name="Kim C.J."/>
            <person name="Koo H.L."/>
            <person name="Kremenetskaia I."/>
            <person name="Kurtz D.B."/>
            <person name="Kwan A."/>
            <person name="Lam B."/>
            <person name="Langin-Hooper S."/>
            <person name="Lee A."/>
            <person name="Lee J.M."/>
            <person name="Lenz C.A."/>
            <person name="Li J.H."/>
            <person name="Li Y.-P."/>
            <person name="Lin X."/>
            <person name="Liu S.X."/>
            <person name="Liu Z.A."/>
            <person name="Luros J.S."/>
            <person name="Maiti R."/>
            <person name="Marziali A."/>
            <person name="Militscher J."/>
            <person name="Miranda M."/>
            <person name="Nguyen M."/>
            <person name="Nierman W.C."/>
            <person name="Osborne B.I."/>
            <person name="Pai G."/>
            <person name="Peterson J."/>
            <person name="Pham P.K."/>
            <person name="Rizzo M."/>
            <person name="Rooney T."/>
            <person name="Rowley D."/>
            <person name="Sakano H."/>
            <person name="Salzberg S.L."/>
            <person name="Schwartz J.R."/>
            <person name="Shinn P."/>
            <person name="Southwick A.M."/>
            <person name="Sun H."/>
            <person name="Tallon L.J."/>
            <person name="Tambunga G."/>
            <person name="Toriumi M.J."/>
            <person name="Town C.D."/>
            <person name="Utterback T."/>
            <person name="Van Aken S."/>
            <person name="Vaysberg M."/>
            <person name="Vysotskaia V.S."/>
            <person name="Walker M."/>
            <person name="Wu D."/>
            <person name="Yu G."/>
            <person name="Fraser C.M."/>
            <person name="Venter J.C."/>
            <person name="Davis R.W."/>
        </authorList>
    </citation>
    <scope>NUCLEOTIDE SEQUENCE [LARGE SCALE GENOMIC DNA]</scope>
    <source>
        <strain>cv. Columbia</strain>
    </source>
</reference>
<reference key="3">
    <citation type="journal article" date="2017" name="Plant J.">
        <title>Araport11: a complete reannotation of the Arabidopsis thaliana reference genome.</title>
        <authorList>
            <person name="Cheng C.Y."/>
            <person name="Krishnakumar V."/>
            <person name="Chan A.P."/>
            <person name="Thibaud-Nissen F."/>
            <person name="Schobel S."/>
            <person name="Town C.D."/>
        </authorList>
    </citation>
    <scope>GENOME REANNOTATION</scope>
    <source>
        <strain>cv. Columbia</strain>
    </source>
</reference>
<reference key="4">
    <citation type="journal article" date="2003" name="Science">
        <title>Empirical analysis of transcriptional activity in the Arabidopsis genome.</title>
        <authorList>
            <person name="Yamada K."/>
            <person name="Lim J."/>
            <person name="Dale J.M."/>
            <person name="Chen H."/>
            <person name="Shinn P."/>
            <person name="Palm C.J."/>
            <person name="Southwick A.M."/>
            <person name="Wu H.C."/>
            <person name="Kim C.J."/>
            <person name="Nguyen M."/>
            <person name="Pham P.K."/>
            <person name="Cheuk R.F."/>
            <person name="Karlin-Newmann G."/>
            <person name="Liu S.X."/>
            <person name="Lam B."/>
            <person name="Sakano H."/>
            <person name="Wu T."/>
            <person name="Yu G."/>
            <person name="Miranda M."/>
            <person name="Quach H.L."/>
            <person name="Tripp M."/>
            <person name="Chang C.H."/>
            <person name="Lee J.M."/>
            <person name="Toriumi M.J."/>
            <person name="Chan M.M."/>
            <person name="Tang C.C."/>
            <person name="Onodera C.S."/>
            <person name="Deng J.M."/>
            <person name="Akiyama K."/>
            <person name="Ansari Y."/>
            <person name="Arakawa T."/>
            <person name="Banh J."/>
            <person name="Banno F."/>
            <person name="Bowser L."/>
            <person name="Brooks S.Y."/>
            <person name="Carninci P."/>
            <person name="Chao Q."/>
            <person name="Choy N."/>
            <person name="Enju A."/>
            <person name="Goldsmith A.D."/>
            <person name="Gurjal M."/>
            <person name="Hansen N.F."/>
            <person name="Hayashizaki Y."/>
            <person name="Johnson-Hopson C."/>
            <person name="Hsuan V.W."/>
            <person name="Iida K."/>
            <person name="Karnes M."/>
            <person name="Khan S."/>
            <person name="Koesema E."/>
            <person name="Ishida J."/>
            <person name="Jiang P.X."/>
            <person name="Jones T."/>
            <person name="Kawai J."/>
            <person name="Kamiya A."/>
            <person name="Meyers C."/>
            <person name="Nakajima M."/>
            <person name="Narusaka M."/>
            <person name="Seki M."/>
            <person name="Sakurai T."/>
            <person name="Satou M."/>
            <person name="Tamse R."/>
            <person name="Vaysberg M."/>
            <person name="Wallender E.K."/>
            <person name="Wong C."/>
            <person name="Yamamura Y."/>
            <person name="Yuan S."/>
            <person name="Shinozaki K."/>
            <person name="Davis R.W."/>
            <person name="Theologis A."/>
            <person name="Ecker J.R."/>
        </authorList>
    </citation>
    <scope>NUCLEOTIDE SEQUENCE [LARGE SCALE MRNA]</scope>
    <source>
        <strain>cv. Columbia</strain>
    </source>
</reference>
<reference key="5">
    <citation type="submission" date="2002-03" db="EMBL/GenBank/DDBJ databases">
        <title>Full-length cDNA from Arabidopsis thaliana.</title>
        <authorList>
            <person name="Brover V.V."/>
            <person name="Troukhan M.E."/>
            <person name="Alexandrov N.A."/>
            <person name="Lu Y.-P."/>
            <person name="Flavell R.B."/>
            <person name="Feldmann K.A."/>
        </authorList>
    </citation>
    <scope>NUCLEOTIDE SEQUENCE [LARGE SCALE MRNA]</scope>
</reference>
<reference key="6">
    <citation type="journal article" date="1998" name="FEBS Lett.">
        <title>Computational analyses and annotations of the Arabidopsis peroxidase gene family.</title>
        <authorList>
            <person name="Oestergaard L."/>
            <person name="Pedersen A.G."/>
            <person name="Jespersen H.M."/>
            <person name="Brunak S."/>
            <person name="Welinder K.G."/>
        </authorList>
    </citation>
    <scope>CHARACTERIZATION</scope>
    <source>
        <strain>cv. Columbia</strain>
    </source>
</reference>
<reference key="7">
    <citation type="journal article" date="2002" name="Gene">
        <title>Analysis and expression of the class III peroxidase large gene family in Arabidopsis thaliana.</title>
        <authorList>
            <person name="Tognolli M."/>
            <person name="Penel C."/>
            <person name="Greppin H."/>
            <person name="Simon P."/>
        </authorList>
    </citation>
    <scope>GENE FAMILY ORGANIZATION</scope>
    <scope>NOMENCLATURE</scope>
    <source>
        <strain>cv. Columbia</strain>
    </source>
</reference>
<organism>
    <name type="scientific">Arabidopsis thaliana</name>
    <name type="common">Mouse-ear cress</name>
    <dbReference type="NCBI Taxonomy" id="3702"/>
    <lineage>
        <taxon>Eukaryota</taxon>
        <taxon>Viridiplantae</taxon>
        <taxon>Streptophyta</taxon>
        <taxon>Embryophyta</taxon>
        <taxon>Tracheophyta</taxon>
        <taxon>Spermatophyta</taxon>
        <taxon>Magnoliopsida</taxon>
        <taxon>eudicotyledons</taxon>
        <taxon>Gunneridae</taxon>
        <taxon>Pentapetalae</taxon>
        <taxon>rosids</taxon>
        <taxon>malvids</taxon>
        <taxon>Brassicales</taxon>
        <taxon>Brassicaceae</taxon>
        <taxon>Camelineae</taxon>
        <taxon>Arabidopsis</taxon>
    </lineage>
</organism>
<comment type="function">
    <text>Removal of H(2)O(2), oxidation of toxic reductants, biosynthesis and degradation of lignin, suberization, auxin catabolism, response to environmental stresses such as wounding, pathogen attack and oxidative stress. These functions might be dependent on each isozyme/isoform in each plant tissue.</text>
</comment>
<comment type="catalytic activity">
    <reaction>
        <text>2 a phenolic donor + H2O2 = 2 a phenolic radical donor + 2 H2O</text>
        <dbReference type="Rhea" id="RHEA:56136"/>
        <dbReference type="ChEBI" id="CHEBI:15377"/>
        <dbReference type="ChEBI" id="CHEBI:16240"/>
        <dbReference type="ChEBI" id="CHEBI:139520"/>
        <dbReference type="ChEBI" id="CHEBI:139521"/>
        <dbReference type="EC" id="1.11.1.7"/>
    </reaction>
</comment>
<comment type="cofactor">
    <cofactor evidence="2">
        <name>heme b</name>
        <dbReference type="ChEBI" id="CHEBI:60344"/>
    </cofactor>
    <text evidence="2">Binds 1 heme b (iron(II)-protoporphyrin IX) group per subunit.</text>
</comment>
<comment type="cofactor">
    <cofactor evidence="2">
        <name>Ca(2+)</name>
        <dbReference type="ChEBI" id="CHEBI:29108"/>
    </cofactor>
    <text evidence="2">Binds 2 calcium ions per subunit.</text>
</comment>
<comment type="subcellular location">
    <subcellularLocation>
        <location evidence="2">Secreted</location>
    </subcellularLocation>
</comment>
<comment type="miscellaneous">
    <text>There are 73 peroxidase genes in A.thaliana.</text>
</comment>
<comment type="similarity">
    <text evidence="2">Belongs to the peroxidase family. Classical plant (class III) peroxidase subfamily.</text>
</comment>
<protein>
    <recommendedName>
        <fullName>Peroxidase 9</fullName>
        <shortName>Atperox P9</shortName>
        <ecNumber>1.11.1.7</ecNumber>
    </recommendedName>
    <alternativeName>
        <fullName>ATP18a</fullName>
    </alternativeName>
</protein>
<keyword id="KW-0106">Calcium</keyword>
<keyword id="KW-1015">Disulfide bond</keyword>
<keyword id="KW-0325">Glycoprotein</keyword>
<keyword id="KW-0349">Heme</keyword>
<keyword id="KW-0376">Hydrogen peroxide</keyword>
<keyword id="KW-0408">Iron</keyword>
<keyword id="KW-0479">Metal-binding</keyword>
<keyword id="KW-0560">Oxidoreductase</keyword>
<keyword id="KW-0575">Peroxidase</keyword>
<keyword id="KW-1185">Reference proteome</keyword>
<keyword id="KW-0964">Secreted</keyword>
<keyword id="KW-0732">Signal</keyword>
<gene>
    <name type="primary">PER9</name>
    <name type="synonym">P9</name>
    <name type="ordered locus">At1g44970</name>
    <name type="ORF">F27F5.6</name>
    <name type="ORF">T22C22.24</name>
</gene>
<sequence length="346" mass="37741">MAISKLIPTLVLFVLFSFDVSVAHPGLGFGWGSNSPIGGSFYSNLYPQFYQFSCPQADEIVMTVLEKAIAKEPRMAASLLRLHFHDCFVQGCDASILLDDSATIRSEKNAGPNKNSVRGFQVIDEIKAKLEQACPQTVSCADILALAARGSTILSGGPSWELPLGRRDSRTASLNGANTNIPAPNSTIQNLLTMFQRKGLNEEDLVSLSGGHTIGVARCTTFKQRLYNQNGNNQPDETLERSYYYGLRSICPPTGGDNNISPLDLASPARFDNTYFKLLLWGKGLLTSDEVLLTGNVGKTGALVKAYAEDERLFFQQFAKSMVNMGNIQPLTGFNGEIRKSCHVIN</sequence>